<evidence type="ECO:0000255" key="1">
    <source>
        <dbReference type="HAMAP-Rule" id="MF_00165"/>
    </source>
</evidence>
<accession>A5UKJ7</accession>
<comment type="catalytic activity">
    <reaction evidence="1">
        <text>dTMP + ATP = dTDP + ADP</text>
        <dbReference type="Rhea" id="RHEA:13517"/>
        <dbReference type="ChEBI" id="CHEBI:30616"/>
        <dbReference type="ChEBI" id="CHEBI:58369"/>
        <dbReference type="ChEBI" id="CHEBI:63528"/>
        <dbReference type="ChEBI" id="CHEBI:456216"/>
        <dbReference type="EC" id="2.7.4.9"/>
    </reaction>
</comment>
<comment type="similarity">
    <text evidence="1">Belongs to the thymidylate kinase family.</text>
</comment>
<gene>
    <name evidence="1" type="primary">tmk</name>
    <name type="ordered locus">Msm_0520</name>
</gene>
<organism>
    <name type="scientific">Methanobrevibacter smithii (strain ATCC 35061 / DSM 861 / OCM 144 / PS)</name>
    <dbReference type="NCBI Taxonomy" id="420247"/>
    <lineage>
        <taxon>Archaea</taxon>
        <taxon>Methanobacteriati</taxon>
        <taxon>Methanobacteriota</taxon>
        <taxon>Methanomada group</taxon>
        <taxon>Methanobacteria</taxon>
        <taxon>Methanobacteriales</taxon>
        <taxon>Methanobacteriaceae</taxon>
        <taxon>Methanobrevibacter</taxon>
    </lineage>
</organism>
<name>KTHY_METS3</name>
<dbReference type="EC" id="2.7.4.9" evidence="1"/>
<dbReference type="EMBL" id="CP000678">
    <property type="protein sequence ID" value="ABQ86725.1"/>
    <property type="molecule type" value="Genomic_DNA"/>
</dbReference>
<dbReference type="RefSeq" id="WP_011953945.1">
    <property type="nucleotide sequence ID" value="NZ_CP117965.1"/>
</dbReference>
<dbReference type="SMR" id="A5UKJ7"/>
<dbReference type="STRING" id="420247.Msm_0520"/>
<dbReference type="EnsemblBacteria" id="ABQ86725">
    <property type="protein sequence ID" value="ABQ86725"/>
    <property type="gene ID" value="Msm_0520"/>
</dbReference>
<dbReference type="GeneID" id="78817146"/>
<dbReference type="KEGG" id="msi:Msm_0520"/>
<dbReference type="PATRIC" id="fig|420247.28.peg.519"/>
<dbReference type="eggNOG" id="arCOG01891">
    <property type="taxonomic scope" value="Archaea"/>
</dbReference>
<dbReference type="HOGENOM" id="CLU_049131_1_3_2"/>
<dbReference type="Proteomes" id="UP000001992">
    <property type="component" value="Chromosome"/>
</dbReference>
<dbReference type="GO" id="GO:0005737">
    <property type="term" value="C:cytoplasm"/>
    <property type="evidence" value="ECO:0007669"/>
    <property type="project" value="TreeGrafter"/>
</dbReference>
<dbReference type="GO" id="GO:0005524">
    <property type="term" value="F:ATP binding"/>
    <property type="evidence" value="ECO:0007669"/>
    <property type="project" value="UniProtKB-UniRule"/>
</dbReference>
<dbReference type="GO" id="GO:0004798">
    <property type="term" value="F:dTMP kinase activity"/>
    <property type="evidence" value="ECO:0007669"/>
    <property type="project" value="UniProtKB-UniRule"/>
</dbReference>
<dbReference type="GO" id="GO:0006233">
    <property type="term" value="P:dTDP biosynthetic process"/>
    <property type="evidence" value="ECO:0007669"/>
    <property type="project" value="InterPro"/>
</dbReference>
<dbReference type="GO" id="GO:0006235">
    <property type="term" value="P:dTTP biosynthetic process"/>
    <property type="evidence" value="ECO:0007669"/>
    <property type="project" value="UniProtKB-UniRule"/>
</dbReference>
<dbReference type="GO" id="GO:0006227">
    <property type="term" value="P:dUDP biosynthetic process"/>
    <property type="evidence" value="ECO:0007669"/>
    <property type="project" value="TreeGrafter"/>
</dbReference>
<dbReference type="CDD" id="cd01672">
    <property type="entry name" value="TMPK"/>
    <property type="match status" value="1"/>
</dbReference>
<dbReference type="Gene3D" id="3.40.50.300">
    <property type="entry name" value="P-loop containing nucleotide triphosphate hydrolases"/>
    <property type="match status" value="1"/>
</dbReference>
<dbReference type="HAMAP" id="MF_00165">
    <property type="entry name" value="Thymidylate_kinase"/>
    <property type="match status" value="1"/>
</dbReference>
<dbReference type="InterPro" id="IPR027417">
    <property type="entry name" value="P-loop_NTPase"/>
</dbReference>
<dbReference type="InterPro" id="IPR039430">
    <property type="entry name" value="Thymidylate_kin-like_dom"/>
</dbReference>
<dbReference type="InterPro" id="IPR018095">
    <property type="entry name" value="Thymidylate_kin_CS"/>
</dbReference>
<dbReference type="InterPro" id="IPR018094">
    <property type="entry name" value="Thymidylate_kinase"/>
</dbReference>
<dbReference type="NCBIfam" id="TIGR00041">
    <property type="entry name" value="DTMP_kinase"/>
    <property type="match status" value="1"/>
</dbReference>
<dbReference type="PANTHER" id="PTHR10344">
    <property type="entry name" value="THYMIDYLATE KINASE"/>
    <property type="match status" value="1"/>
</dbReference>
<dbReference type="PANTHER" id="PTHR10344:SF4">
    <property type="entry name" value="UMP-CMP KINASE 2, MITOCHONDRIAL"/>
    <property type="match status" value="1"/>
</dbReference>
<dbReference type="Pfam" id="PF02223">
    <property type="entry name" value="Thymidylate_kin"/>
    <property type="match status" value="1"/>
</dbReference>
<dbReference type="SUPFAM" id="SSF52540">
    <property type="entry name" value="P-loop containing nucleoside triphosphate hydrolases"/>
    <property type="match status" value="1"/>
</dbReference>
<dbReference type="PROSITE" id="PS01331">
    <property type="entry name" value="THYMIDYLATE_KINASE"/>
    <property type="match status" value="1"/>
</dbReference>
<feature type="chain" id="PRO_1000058253" description="Probable thymidylate kinase">
    <location>
        <begin position="1"/>
        <end position="192"/>
    </location>
</feature>
<feature type="binding site" evidence="1">
    <location>
        <begin position="7"/>
        <end position="14"/>
    </location>
    <ligand>
        <name>ATP</name>
        <dbReference type="ChEBI" id="CHEBI:30616"/>
    </ligand>
</feature>
<protein>
    <recommendedName>
        <fullName evidence="1">Probable thymidylate kinase</fullName>
        <ecNumber evidence="1">2.7.4.9</ecNumber>
    </recommendedName>
    <alternativeName>
        <fullName evidence="1">dTMP kinase</fullName>
    </alternativeName>
</protein>
<reference key="1">
    <citation type="journal article" date="2007" name="Proc. Natl. Acad. Sci. U.S.A.">
        <title>Genomic and metabolic adaptations of Methanobrevibacter smithii to the human gut.</title>
        <authorList>
            <person name="Samuel B.S."/>
            <person name="Hansen E.E."/>
            <person name="Manchester J.K."/>
            <person name="Coutinho P.M."/>
            <person name="Henrissat B."/>
            <person name="Fulton R."/>
            <person name="Latreille P."/>
            <person name="Kim K."/>
            <person name="Wilson R.K."/>
            <person name="Gordon J.I."/>
        </authorList>
    </citation>
    <scope>NUCLEOTIDE SEQUENCE [LARGE SCALE GENOMIC DNA]</scope>
    <source>
        <strain>ATCC 35061 / DSM 861 / OCM 144 / PS</strain>
    </source>
</reference>
<proteinExistence type="inferred from homology"/>
<keyword id="KW-0067">ATP-binding</keyword>
<keyword id="KW-0418">Kinase</keyword>
<keyword id="KW-0545">Nucleotide biosynthesis</keyword>
<keyword id="KW-0547">Nucleotide-binding</keyword>
<keyword id="KW-0808">Transferase</keyword>
<sequence length="192" mass="21696">MYIVFEGIDGAGKSTQINLLKDWLDQNGFDVETVVEPTDSEVGKLIRKILQRPDATTDRIQKTLGLLFAADRMLIMDKLNDDSKVILSDRSFISSLAYQEPAEWIEQINKYAKEPDLVLLLDVDVKTSVNRCSKEDEFENEEFLSKVKANYLDLISNFNHEIIDASTGVNKVSTDIKKAVAPYMGICPDCIR</sequence>